<feature type="chain" id="PRO_0000316918" description="Putative phospholipase A2">
    <location>
        <begin position="1"/>
        <end position="438"/>
    </location>
</feature>
<feature type="active site" description="Nucleophile" evidence="1">
    <location>
        <position position="257"/>
    </location>
</feature>
<feature type="active site" description="Charge relay system" evidence="3">
    <location>
        <position position="291"/>
    </location>
</feature>
<feature type="active site" description="Charge relay system" evidence="3">
    <location>
        <position position="368"/>
    </location>
</feature>
<dbReference type="EC" id="3.1.1.47"/>
<dbReference type="EMBL" id="CU329671">
    <property type="protein sequence ID" value="CAB53727.1"/>
    <property type="molecule type" value="Genomic_DNA"/>
</dbReference>
<dbReference type="PIR" id="T39268">
    <property type="entry name" value="T39268"/>
</dbReference>
<dbReference type="RefSeq" id="NP_595160.1">
    <property type="nucleotide sequence ID" value="NM_001021069.2"/>
</dbReference>
<dbReference type="SMR" id="Q9URV1"/>
<dbReference type="BioGRID" id="276349">
    <property type="interactions" value="5"/>
</dbReference>
<dbReference type="FunCoup" id="Q9URV1">
    <property type="interactions" value="12"/>
</dbReference>
<dbReference type="STRING" id="284812.Q9URV1"/>
<dbReference type="ESTHER" id="schpo-PLG7">
    <property type="family name" value="PAF-Acetylhydrolase"/>
</dbReference>
<dbReference type="iPTMnet" id="Q9URV1"/>
<dbReference type="PaxDb" id="4896-SPBC106.11c.1"/>
<dbReference type="EnsemblFungi" id="SPBC106.11c.1">
    <property type="protein sequence ID" value="SPBC106.11c.1:pep"/>
    <property type="gene ID" value="SPBC106.11c"/>
</dbReference>
<dbReference type="GeneID" id="2539799"/>
<dbReference type="KEGG" id="spo:2539799"/>
<dbReference type="PomBase" id="SPBC106.11c">
    <property type="gene designation" value="plg7"/>
</dbReference>
<dbReference type="VEuPathDB" id="FungiDB:SPBC106.11c"/>
<dbReference type="eggNOG" id="KOG3847">
    <property type="taxonomic scope" value="Eukaryota"/>
</dbReference>
<dbReference type="HOGENOM" id="CLU_655796_0_0_1"/>
<dbReference type="InParanoid" id="Q9URV1"/>
<dbReference type="OMA" id="FDQWDNL"/>
<dbReference type="PhylomeDB" id="Q9URV1"/>
<dbReference type="Reactome" id="R-SPO-418346">
    <property type="pathway name" value="Platelet homeostasis"/>
</dbReference>
<dbReference type="PRO" id="PR:Q9URV1"/>
<dbReference type="Proteomes" id="UP000002485">
    <property type="component" value="Chromosome II"/>
</dbReference>
<dbReference type="GO" id="GO:0005829">
    <property type="term" value="C:cytosol"/>
    <property type="evidence" value="ECO:0007005"/>
    <property type="project" value="PomBase"/>
</dbReference>
<dbReference type="GO" id="GO:0005634">
    <property type="term" value="C:nucleus"/>
    <property type="evidence" value="ECO:0007005"/>
    <property type="project" value="PomBase"/>
</dbReference>
<dbReference type="GO" id="GO:0003847">
    <property type="term" value="F:1-alkyl-2-acetylglycerophosphocholine esterase activity"/>
    <property type="evidence" value="ECO:0000315"/>
    <property type="project" value="PomBase"/>
</dbReference>
<dbReference type="GO" id="GO:0034599">
    <property type="term" value="P:cellular response to oxidative stress"/>
    <property type="evidence" value="ECO:0000315"/>
    <property type="project" value="PomBase"/>
</dbReference>
<dbReference type="GO" id="GO:0009395">
    <property type="term" value="P:phospholipid catabolic process"/>
    <property type="evidence" value="ECO:0000315"/>
    <property type="project" value="PomBase"/>
</dbReference>
<dbReference type="Gene3D" id="3.40.50.1820">
    <property type="entry name" value="alpha/beta hydrolase"/>
    <property type="match status" value="1"/>
</dbReference>
<dbReference type="InterPro" id="IPR029058">
    <property type="entry name" value="AB_hydrolase_fold"/>
</dbReference>
<dbReference type="InterPro" id="IPR016715">
    <property type="entry name" value="PAF_acetylhydro_eukaryote"/>
</dbReference>
<dbReference type="PANTHER" id="PTHR10272">
    <property type="entry name" value="PLATELET-ACTIVATING FACTOR ACETYLHYDROLASE"/>
    <property type="match status" value="1"/>
</dbReference>
<dbReference type="PANTHER" id="PTHR10272:SF0">
    <property type="entry name" value="PLATELET-ACTIVATING FACTOR ACETYLHYDROLASE"/>
    <property type="match status" value="1"/>
</dbReference>
<dbReference type="Pfam" id="PF03403">
    <property type="entry name" value="PAF-AH_p_II"/>
    <property type="match status" value="1"/>
</dbReference>
<dbReference type="PIRSF" id="PIRSF018169">
    <property type="entry name" value="PAF_acetylhydrolase"/>
    <property type="match status" value="1"/>
</dbReference>
<dbReference type="SUPFAM" id="SSF53474">
    <property type="entry name" value="alpha/beta-Hydrolases"/>
    <property type="match status" value="1"/>
</dbReference>
<keyword id="KW-0963">Cytoplasm</keyword>
<keyword id="KW-0378">Hydrolase</keyword>
<keyword id="KW-0442">Lipid degradation</keyword>
<keyword id="KW-0443">Lipid metabolism</keyword>
<keyword id="KW-0539">Nucleus</keyword>
<keyword id="KW-1185">Reference proteome</keyword>
<protein>
    <recommendedName>
        <fullName>Putative phospholipase A2</fullName>
        <ecNumber>3.1.1.47</ecNumber>
    </recommendedName>
    <alternativeName>
        <fullName>1-alkyl-2-acetylglycerophosphocholine esterase</fullName>
    </alternativeName>
    <alternativeName>
        <fullName>2-acetyl-1-alkylglycerophosphocholine esterase</fullName>
    </alternativeName>
</protein>
<proteinExistence type="inferred from homology"/>
<gene>
    <name evidence="7" type="primary">plg7</name>
    <name type="ORF">SPBC106.11c</name>
</gene>
<organism>
    <name type="scientific">Schizosaccharomyces pombe (strain 972 / ATCC 24843)</name>
    <name type="common">Fission yeast</name>
    <dbReference type="NCBI Taxonomy" id="284812"/>
    <lineage>
        <taxon>Eukaryota</taxon>
        <taxon>Fungi</taxon>
        <taxon>Dikarya</taxon>
        <taxon>Ascomycota</taxon>
        <taxon>Taphrinomycotina</taxon>
        <taxon>Schizosaccharomycetes</taxon>
        <taxon>Schizosaccharomycetales</taxon>
        <taxon>Schizosaccharomycetaceae</taxon>
        <taxon>Schizosaccharomyces</taxon>
    </lineage>
</organism>
<sequence>MGLGFSSKKQLPAYCGPLPVGSLVLELSVPEEFRCEYKTIEHKLRTVKVRIFYPLDPTKDVEPRTDELWLPFHEGIPEVAKGFRWWLLRAFASGLTNLALPVYKGELFHPPNNGKLPVFIFSHGLVGSRNVYSSLCGTIASYGIVVLAMEHRDNSAIISTVRDPLHPEEPPYVVQYREISDFYADATVVLQNERLLFRQQEIQIALQMIRNINDLGTPDENLPFLCSVDSSFYNSVFQSMKGNLNTAQGELIVAGHSFGAATCAFISGSSTKSLYNDYMFHTEFKCSILYDIWMLPVRQLHLSTMRYPTLMIISYEFRRFVDNFQALESWLVNKDSENQNAGESADEKMSVVPLKKYSHVFVYDGTVHANQSDLPILLPRMVLRVLKGKFEADPYEALRINTRSSVQFLRENHVENVQGDNDPSSLQTNIIPGWERIM</sequence>
<evidence type="ECO:0000250" key="1"/>
<evidence type="ECO:0000250" key="2">
    <source>
        <dbReference type="UniProtKB" id="P83006"/>
    </source>
</evidence>
<evidence type="ECO:0000250" key="3">
    <source>
        <dbReference type="UniProtKB" id="Q13093"/>
    </source>
</evidence>
<evidence type="ECO:0000255" key="4"/>
<evidence type="ECO:0000269" key="5">
    <source>
    </source>
</evidence>
<evidence type="ECO:0000305" key="6"/>
<evidence type="ECO:0000312" key="7">
    <source>
        <dbReference type="EMBL" id="CAB53727.1"/>
    </source>
</evidence>
<name>PLG7_SCHPO</name>
<reference evidence="7" key="1">
    <citation type="journal article" date="2002" name="Nature">
        <title>The genome sequence of Schizosaccharomyces pombe.</title>
        <authorList>
            <person name="Wood V."/>
            <person name="Gwilliam R."/>
            <person name="Rajandream M.A."/>
            <person name="Lyne M.H."/>
            <person name="Lyne R."/>
            <person name="Stewart A."/>
            <person name="Sgouros J.G."/>
            <person name="Peat N."/>
            <person name="Hayles J."/>
            <person name="Baker S.G."/>
            <person name="Basham D."/>
            <person name="Bowman S."/>
            <person name="Brooks K."/>
            <person name="Brown D."/>
            <person name="Brown S."/>
            <person name="Chillingworth T."/>
            <person name="Churcher C.M."/>
            <person name="Collins M."/>
            <person name="Connor R."/>
            <person name="Cronin A."/>
            <person name="Davis P."/>
            <person name="Feltwell T."/>
            <person name="Fraser A."/>
            <person name="Gentles S."/>
            <person name="Goble A."/>
            <person name="Hamlin N."/>
            <person name="Harris D.E."/>
            <person name="Hidalgo J."/>
            <person name="Hodgson G."/>
            <person name="Holroyd S."/>
            <person name="Hornsby T."/>
            <person name="Howarth S."/>
            <person name="Huckle E.J."/>
            <person name="Hunt S."/>
            <person name="Jagels K."/>
            <person name="James K.D."/>
            <person name="Jones L."/>
            <person name="Jones M."/>
            <person name="Leather S."/>
            <person name="McDonald S."/>
            <person name="McLean J."/>
            <person name="Mooney P."/>
            <person name="Moule S."/>
            <person name="Mungall K.L."/>
            <person name="Murphy L.D."/>
            <person name="Niblett D."/>
            <person name="Odell C."/>
            <person name="Oliver K."/>
            <person name="O'Neil S."/>
            <person name="Pearson D."/>
            <person name="Quail M.A."/>
            <person name="Rabbinowitsch E."/>
            <person name="Rutherford K.M."/>
            <person name="Rutter S."/>
            <person name="Saunders D."/>
            <person name="Seeger K."/>
            <person name="Sharp S."/>
            <person name="Skelton J."/>
            <person name="Simmonds M.N."/>
            <person name="Squares R."/>
            <person name="Squares S."/>
            <person name="Stevens K."/>
            <person name="Taylor K."/>
            <person name="Taylor R.G."/>
            <person name="Tivey A."/>
            <person name="Walsh S.V."/>
            <person name="Warren T."/>
            <person name="Whitehead S."/>
            <person name="Woodward J.R."/>
            <person name="Volckaert G."/>
            <person name="Aert R."/>
            <person name="Robben J."/>
            <person name="Grymonprez B."/>
            <person name="Weltjens I."/>
            <person name="Vanstreels E."/>
            <person name="Rieger M."/>
            <person name="Schaefer M."/>
            <person name="Mueller-Auer S."/>
            <person name="Gabel C."/>
            <person name="Fuchs M."/>
            <person name="Duesterhoeft A."/>
            <person name="Fritzc C."/>
            <person name="Holzer E."/>
            <person name="Moestl D."/>
            <person name="Hilbert H."/>
            <person name="Borzym K."/>
            <person name="Langer I."/>
            <person name="Beck A."/>
            <person name="Lehrach H."/>
            <person name="Reinhardt R."/>
            <person name="Pohl T.M."/>
            <person name="Eger P."/>
            <person name="Zimmermann W."/>
            <person name="Wedler H."/>
            <person name="Wambutt R."/>
            <person name="Purnelle B."/>
            <person name="Goffeau A."/>
            <person name="Cadieu E."/>
            <person name="Dreano S."/>
            <person name="Gloux S."/>
            <person name="Lelaure V."/>
            <person name="Mottier S."/>
            <person name="Galibert F."/>
            <person name="Aves S.J."/>
            <person name="Xiang Z."/>
            <person name="Hunt C."/>
            <person name="Moore K."/>
            <person name="Hurst S.M."/>
            <person name="Lucas M."/>
            <person name="Rochet M."/>
            <person name="Gaillardin C."/>
            <person name="Tallada V.A."/>
            <person name="Garzon A."/>
            <person name="Thode G."/>
            <person name="Daga R.R."/>
            <person name="Cruzado L."/>
            <person name="Jimenez J."/>
            <person name="Sanchez M."/>
            <person name="del Rey F."/>
            <person name="Benito J."/>
            <person name="Dominguez A."/>
            <person name="Revuelta J.L."/>
            <person name="Moreno S."/>
            <person name="Armstrong J."/>
            <person name="Forsburg S.L."/>
            <person name="Cerutti L."/>
            <person name="Lowe T."/>
            <person name="McCombie W.R."/>
            <person name="Paulsen I."/>
            <person name="Potashkin J."/>
            <person name="Shpakovski G.V."/>
            <person name="Ussery D."/>
            <person name="Barrell B.G."/>
            <person name="Nurse P."/>
        </authorList>
    </citation>
    <scope>NUCLEOTIDE SEQUENCE [LARGE SCALE GENOMIC DNA]</scope>
    <source>
        <strain>972 / ATCC 24843</strain>
    </source>
</reference>
<reference evidence="6" key="2">
    <citation type="journal article" date="2006" name="Nat. Biotechnol.">
        <title>ORFeome cloning and global analysis of protein localization in the fission yeast Schizosaccharomyces pombe.</title>
        <authorList>
            <person name="Matsuyama A."/>
            <person name="Arai R."/>
            <person name="Yashiroda Y."/>
            <person name="Shirai A."/>
            <person name="Kamata A."/>
            <person name="Sekido S."/>
            <person name="Kobayashi Y."/>
            <person name="Hashimoto A."/>
            <person name="Hamamoto M."/>
            <person name="Hiraoka Y."/>
            <person name="Horinouchi S."/>
            <person name="Yoshida M."/>
        </authorList>
    </citation>
    <scope>SUBCELLULAR LOCATION [LARGE SCALE ANALYSIS]</scope>
</reference>
<accession>Q9URV1</accession>
<comment type="catalytic activity">
    <reaction evidence="2 3">
        <text>a 1-O-alkyl-2-acetyl-sn-glycero-3-phosphocholine + H2O = a 1-O-alkyl-sn-glycero-3-phosphocholine + acetate + H(+)</text>
        <dbReference type="Rhea" id="RHEA:17777"/>
        <dbReference type="ChEBI" id="CHEBI:15377"/>
        <dbReference type="ChEBI" id="CHEBI:15378"/>
        <dbReference type="ChEBI" id="CHEBI:30089"/>
        <dbReference type="ChEBI" id="CHEBI:30909"/>
        <dbReference type="ChEBI" id="CHEBI:36707"/>
        <dbReference type="EC" id="3.1.1.47"/>
    </reaction>
</comment>
<comment type="subcellular location">
    <subcellularLocation>
        <location evidence="5">Cytoplasm</location>
    </subcellularLocation>
    <subcellularLocation>
        <location evidence="5">Nucleus</location>
    </subcellularLocation>
</comment>
<comment type="similarity">
    <text evidence="4">Belongs to the serine esterase family.</text>
</comment>